<sequence>MSVIKMTDLDLAGKRVFIRADLNVPVKEGKVTSDARIRASLPTIELALKQGAKVMVTSHLGRPTEGEYNEEFSLLPVVNYLKDKLSNPVRLVKDYLDGVDVAEGELVVLENVRFNKGEKKDDEALSKKYAALCDVFVMDAFGTAHRAQASTHGIGKFADVACAGPLLAAELDALGKALKEPARPMVAIVGGSKVSTKLTVLDSLSKIADQLIVGGGIANTFVAAQGHSVGKSLYEADLVDEAKRLLTTCDIPVPTDVRVATEFSETAPATLKSVNDVKEDEQILDIGDASAQQLAEILKNAKTILWNGPVGVFEFPNFRKGTEIVANAIADSEAFSIAGGGDTLAAIDLFGIADKISYISTGGGAFLEFVEGKVLPAVAMLEERAKK</sequence>
<protein>
    <recommendedName>
        <fullName evidence="1">Phosphoglycerate kinase</fullName>
        <ecNumber evidence="1">2.7.2.3</ecNumber>
    </recommendedName>
</protein>
<feature type="chain" id="PRO_1000096370" description="Phosphoglycerate kinase">
    <location>
        <begin position="1"/>
        <end position="387"/>
    </location>
</feature>
<feature type="binding site" evidence="1">
    <location>
        <begin position="21"/>
        <end position="23"/>
    </location>
    <ligand>
        <name>substrate</name>
    </ligand>
</feature>
<feature type="binding site" evidence="1">
    <location>
        <position position="36"/>
    </location>
    <ligand>
        <name>substrate</name>
    </ligand>
</feature>
<feature type="binding site" evidence="1">
    <location>
        <begin position="59"/>
        <end position="62"/>
    </location>
    <ligand>
        <name>substrate</name>
    </ligand>
</feature>
<feature type="binding site" evidence="1">
    <location>
        <position position="113"/>
    </location>
    <ligand>
        <name>substrate</name>
    </ligand>
</feature>
<feature type="binding site" evidence="1">
    <location>
        <position position="146"/>
    </location>
    <ligand>
        <name>substrate</name>
    </ligand>
</feature>
<feature type="binding site" evidence="1">
    <location>
        <position position="197"/>
    </location>
    <ligand>
        <name>ATP</name>
        <dbReference type="ChEBI" id="CHEBI:30616"/>
    </ligand>
</feature>
<feature type="binding site" evidence="1">
    <location>
        <position position="314"/>
    </location>
    <ligand>
        <name>ATP</name>
        <dbReference type="ChEBI" id="CHEBI:30616"/>
    </ligand>
</feature>
<feature type="binding site" evidence="1">
    <location>
        <begin position="340"/>
        <end position="343"/>
    </location>
    <ligand>
        <name>ATP</name>
        <dbReference type="ChEBI" id="CHEBI:30616"/>
    </ligand>
</feature>
<reference key="1">
    <citation type="journal article" date="2011" name="J. Bacteriol.">
        <title>Comparative genomics of 28 Salmonella enterica isolates: evidence for CRISPR-mediated adaptive sublineage evolution.</title>
        <authorList>
            <person name="Fricke W.F."/>
            <person name="Mammel M.K."/>
            <person name="McDermott P.F."/>
            <person name="Tartera C."/>
            <person name="White D.G."/>
            <person name="Leclerc J.E."/>
            <person name="Ravel J."/>
            <person name="Cebula T.A."/>
        </authorList>
    </citation>
    <scope>NUCLEOTIDE SEQUENCE [LARGE SCALE GENOMIC DNA]</scope>
    <source>
        <strain>CT_02021853</strain>
    </source>
</reference>
<comment type="catalytic activity">
    <reaction evidence="1">
        <text>(2R)-3-phosphoglycerate + ATP = (2R)-3-phospho-glyceroyl phosphate + ADP</text>
        <dbReference type="Rhea" id="RHEA:14801"/>
        <dbReference type="ChEBI" id="CHEBI:30616"/>
        <dbReference type="ChEBI" id="CHEBI:57604"/>
        <dbReference type="ChEBI" id="CHEBI:58272"/>
        <dbReference type="ChEBI" id="CHEBI:456216"/>
        <dbReference type="EC" id="2.7.2.3"/>
    </reaction>
</comment>
<comment type="pathway">
    <text evidence="1">Carbohydrate degradation; glycolysis; pyruvate from D-glyceraldehyde 3-phosphate: step 2/5.</text>
</comment>
<comment type="subunit">
    <text evidence="1">Monomer.</text>
</comment>
<comment type="subcellular location">
    <subcellularLocation>
        <location evidence="1">Cytoplasm</location>
    </subcellularLocation>
</comment>
<comment type="similarity">
    <text evidence="1">Belongs to the phosphoglycerate kinase family.</text>
</comment>
<keyword id="KW-0067">ATP-binding</keyword>
<keyword id="KW-0963">Cytoplasm</keyword>
<keyword id="KW-0324">Glycolysis</keyword>
<keyword id="KW-0418">Kinase</keyword>
<keyword id="KW-0547">Nucleotide-binding</keyword>
<keyword id="KW-0808">Transferase</keyword>
<evidence type="ECO:0000255" key="1">
    <source>
        <dbReference type="HAMAP-Rule" id="MF_00145"/>
    </source>
</evidence>
<gene>
    <name evidence="1" type="primary">pgk</name>
    <name type="ordered locus">SeD_A3411</name>
</gene>
<dbReference type="EC" id="2.7.2.3" evidence="1"/>
<dbReference type="EMBL" id="CP001144">
    <property type="protein sequence ID" value="ACH74772.1"/>
    <property type="molecule type" value="Genomic_DNA"/>
</dbReference>
<dbReference type="RefSeq" id="WP_000111274.1">
    <property type="nucleotide sequence ID" value="NC_011205.1"/>
</dbReference>
<dbReference type="SMR" id="B5FUI2"/>
<dbReference type="KEGG" id="sed:SeD_A3411"/>
<dbReference type="HOGENOM" id="CLU_025427_0_2_6"/>
<dbReference type="UniPathway" id="UPA00109">
    <property type="reaction ID" value="UER00185"/>
</dbReference>
<dbReference type="Proteomes" id="UP000008322">
    <property type="component" value="Chromosome"/>
</dbReference>
<dbReference type="GO" id="GO:0005829">
    <property type="term" value="C:cytosol"/>
    <property type="evidence" value="ECO:0007669"/>
    <property type="project" value="TreeGrafter"/>
</dbReference>
<dbReference type="GO" id="GO:0043531">
    <property type="term" value="F:ADP binding"/>
    <property type="evidence" value="ECO:0007669"/>
    <property type="project" value="TreeGrafter"/>
</dbReference>
<dbReference type="GO" id="GO:0005524">
    <property type="term" value="F:ATP binding"/>
    <property type="evidence" value="ECO:0007669"/>
    <property type="project" value="UniProtKB-KW"/>
</dbReference>
<dbReference type="GO" id="GO:0004618">
    <property type="term" value="F:phosphoglycerate kinase activity"/>
    <property type="evidence" value="ECO:0007669"/>
    <property type="project" value="UniProtKB-UniRule"/>
</dbReference>
<dbReference type="GO" id="GO:0006094">
    <property type="term" value="P:gluconeogenesis"/>
    <property type="evidence" value="ECO:0007669"/>
    <property type="project" value="TreeGrafter"/>
</dbReference>
<dbReference type="GO" id="GO:0006096">
    <property type="term" value="P:glycolytic process"/>
    <property type="evidence" value="ECO:0007669"/>
    <property type="project" value="UniProtKB-UniRule"/>
</dbReference>
<dbReference type="FunFam" id="3.40.50.1260:FF:000001">
    <property type="entry name" value="Phosphoglycerate kinase"/>
    <property type="match status" value="1"/>
</dbReference>
<dbReference type="FunFam" id="3.40.50.1260:FF:000002">
    <property type="entry name" value="Phosphoglycerate kinase"/>
    <property type="match status" value="1"/>
</dbReference>
<dbReference type="Gene3D" id="3.40.50.1260">
    <property type="entry name" value="Phosphoglycerate kinase, N-terminal domain"/>
    <property type="match status" value="2"/>
</dbReference>
<dbReference type="HAMAP" id="MF_00145">
    <property type="entry name" value="Phosphoglyc_kinase"/>
    <property type="match status" value="1"/>
</dbReference>
<dbReference type="InterPro" id="IPR001576">
    <property type="entry name" value="Phosphoglycerate_kinase"/>
</dbReference>
<dbReference type="InterPro" id="IPR015911">
    <property type="entry name" value="Phosphoglycerate_kinase_CS"/>
</dbReference>
<dbReference type="InterPro" id="IPR015824">
    <property type="entry name" value="Phosphoglycerate_kinase_N"/>
</dbReference>
<dbReference type="InterPro" id="IPR036043">
    <property type="entry name" value="Phosphoglycerate_kinase_sf"/>
</dbReference>
<dbReference type="PANTHER" id="PTHR11406">
    <property type="entry name" value="PHOSPHOGLYCERATE KINASE"/>
    <property type="match status" value="1"/>
</dbReference>
<dbReference type="PANTHER" id="PTHR11406:SF23">
    <property type="entry name" value="PHOSPHOGLYCERATE KINASE 1, CHLOROPLASTIC-RELATED"/>
    <property type="match status" value="1"/>
</dbReference>
<dbReference type="Pfam" id="PF00162">
    <property type="entry name" value="PGK"/>
    <property type="match status" value="1"/>
</dbReference>
<dbReference type="PIRSF" id="PIRSF000724">
    <property type="entry name" value="Pgk"/>
    <property type="match status" value="1"/>
</dbReference>
<dbReference type="PRINTS" id="PR00477">
    <property type="entry name" value="PHGLYCKINASE"/>
</dbReference>
<dbReference type="SUPFAM" id="SSF53748">
    <property type="entry name" value="Phosphoglycerate kinase"/>
    <property type="match status" value="1"/>
</dbReference>
<dbReference type="PROSITE" id="PS00111">
    <property type="entry name" value="PGLYCERATE_KINASE"/>
    <property type="match status" value="1"/>
</dbReference>
<name>PGK_SALDC</name>
<proteinExistence type="inferred from homology"/>
<organism>
    <name type="scientific">Salmonella dublin (strain CT_02021853)</name>
    <dbReference type="NCBI Taxonomy" id="439851"/>
    <lineage>
        <taxon>Bacteria</taxon>
        <taxon>Pseudomonadati</taxon>
        <taxon>Pseudomonadota</taxon>
        <taxon>Gammaproteobacteria</taxon>
        <taxon>Enterobacterales</taxon>
        <taxon>Enterobacteriaceae</taxon>
        <taxon>Salmonella</taxon>
    </lineage>
</organism>
<accession>B5FUI2</accession>